<evidence type="ECO:0000255" key="1">
    <source>
        <dbReference type="HAMAP-Rule" id="MF_00937"/>
    </source>
</evidence>
<evidence type="ECO:0000255" key="2">
    <source>
        <dbReference type="PROSITE-ProRule" id="PRU01384"/>
    </source>
</evidence>
<proteinExistence type="inferred from homology"/>
<name>PARC_STAAR</name>
<organism>
    <name type="scientific">Staphylococcus aureus (strain MRSA252)</name>
    <dbReference type="NCBI Taxonomy" id="282458"/>
    <lineage>
        <taxon>Bacteria</taxon>
        <taxon>Bacillati</taxon>
        <taxon>Bacillota</taxon>
        <taxon>Bacilli</taxon>
        <taxon>Bacillales</taxon>
        <taxon>Staphylococcaceae</taxon>
        <taxon>Staphylococcus</taxon>
    </lineage>
</organism>
<sequence>MSEIIQDLSLEDVLGDRFGRYSKYIIQERALPDVRDGLKPVQRRILYAMYSSGNTHDKNFRKSAKTVGDVIGQYHPHGDFSVYEAMVRLSQDWKLRHVLIEMHGNNGSIDNDPPAAMRYTEAKLSLLAEELLRDINKETVSFISNYDDTTLEPMVLPSRFPNLLVNGSTGISAGYATDIPPHNLAEVIQATLKYIDNPDITVNQLMKYIKGPDFPTGGIIQGIDGIKKAYESGKGRIIVRSKVEEETLRNGRKQLIITEIPYEVNKSSLVKRIDELRADKKVDGIVEVRDETDRTGLRIAIELKKDVNSESIKNYLYKNSDLQISYNFNMVAISDGRPKLMGIRQIIDSYLNHQIEVVANRTKFELDNAEKRMHIVEGLIKALSILDKVIELIRSSKNKRDAKENLIEVYEFTEEQAEAIVMLQLYRLTNTDIVALEGEHKELEALIKQLRHILDNHDALLNVIKEELNEIKKKFKSERLSLIEAEIEEIKIDKEVMVPSEEVILSMTRHGYIKRTSIRSYNASGVEDIGLKDGDSLLKHQEVNTQDTVLVFTNKGRYLFIPVHKLADIRWKELGQHVSQIVPIEEDEVVINVFNEKDFNTDAFYVFATQNGMIKKSTVPLFKTTRFNKPLIATKVKENDDLISVMRFEKDQLITIITNKGMSLTYNTSELSDTGLRAAGVKSINLKAEDFVVMTEGVSENDTILMATQRGSLKRISFKILQVAKRAQRGITLLKELKKNPHRIVAAHVVTGEHSQYTLYSKSNEEHGLINDIHKSEQYTNGSFIVDTDDFGEVIDMYIS</sequence>
<gene>
    <name evidence="1" type="primary">parC</name>
    <name type="ordered locus">SAR1367</name>
</gene>
<keyword id="KW-1003">Cell membrane</keyword>
<keyword id="KW-0238">DNA-binding</keyword>
<keyword id="KW-0413">Isomerase</keyword>
<keyword id="KW-0472">Membrane</keyword>
<keyword id="KW-0799">Topoisomerase</keyword>
<feature type="chain" id="PRO_0000145412" description="DNA topoisomerase 4 subunit A">
    <location>
        <begin position="1"/>
        <end position="800"/>
    </location>
</feature>
<feature type="domain" description="Topo IIA-type catalytic" evidence="2">
    <location>
        <begin position="31"/>
        <end position="495"/>
    </location>
</feature>
<feature type="active site" description="O-(5'-phospho-DNA)-tyrosine intermediate" evidence="1">
    <location>
        <position position="119"/>
    </location>
</feature>
<feature type="site" description="Interaction with DNA" evidence="1">
    <location>
        <position position="39"/>
    </location>
</feature>
<feature type="site" description="Interaction with DNA" evidence="1">
    <location>
        <position position="75"/>
    </location>
</feature>
<feature type="site" description="Interaction with DNA" evidence="1">
    <location>
        <position position="77"/>
    </location>
</feature>
<feature type="site" description="Interaction with DNA" evidence="1">
    <location>
        <position position="88"/>
    </location>
</feature>
<feature type="site" description="Interaction with DNA" evidence="1">
    <location>
        <position position="94"/>
    </location>
</feature>
<feature type="site" description="Transition state stabilizer" evidence="1">
    <location>
        <position position="118"/>
    </location>
</feature>
<reference key="1">
    <citation type="journal article" date="2004" name="Proc. Natl. Acad. Sci. U.S.A.">
        <title>Complete genomes of two clinical Staphylococcus aureus strains: evidence for the rapid evolution of virulence and drug resistance.</title>
        <authorList>
            <person name="Holden M.T.G."/>
            <person name="Feil E.J."/>
            <person name="Lindsay J.A."/>
            <person name="Peacock S.J."/>
            <person name="Day N.P.J."/>
            <person name="Enright M.C."/>
            <person name="Foster T.J."/>
            <person name="Moore C.E."/>
            <person name="Hurst L."/>
            <person name="Atkin R."/>
            <person name="Barron A."/>
            <person name="Bason N."/>
            <person name="Bentley S.D."/>
            <person name="Chillingworth C."/>
            <person name="Chillingworth T."/>
            <person name="Churcher C."/>
            <person name="Clark L."/>
            <person name="Corton C."/>
            <person name="Cronin A."/>
            <person name="Doggett J."/>
            <person name="Dowd L."/>
            <person name="Feltwell T."/>
            <person name="Hance Z."/>
            <person name="Harris B."/>
            <person name="Hauser H."/>
            <person name="Holroyd S."/>
            <person name="Jagels K."/>
            <person name="James K.D."/>
            <person name="Lennard N."/>
            <person name="Line A."/>
            <person name="Mayes R."/>
            <person name="Moule S."/>
            <person name="Mungall K."/>
            <person name="Ormond D."/>
            <person name="Quail M.A."/>
            <person name="Rabbinowitsch E."/>
            <person name="Rutherford K.M."/>
            <person name="Sanders M."/>
            <person name="Sharp S."/>
            <person name="Simmonds M."/>
            <person name="Stevens K."/>
            <person name="Whitehead S."/>
            <person name="Barrell B.G."/>
            <person name="Spratt B.G."/>
            <person name="Parkhill J."/>
        </authorList>
    </citation>
    <scope>NUCLEOTIDE SEQUENCE [LARGE SCALE GENOMIC DNA]</scope>
    <source>
        <strain>MRSA252</strain>
    </source>
</reference>
<accession>Q6GH50</accession>
<dbReference type="EC" id="5.6.2.2" evidence="1"/>
<dbReference type="EMBL" id="BX571856">
    <property type="protein sequence ID" value="CAG40365.1"/>
    <property type="molecule type" value="Genomic_DNA"/>
</dbReference>
<dbReference type="RefSeq" id="WP_001289553.1">
    <property type="nucleotide sequence ID" value="NC_002952.2"/>
</dbReference>
<dbReference type="SMR" id="Q6GH50"/>
<dbReference type="KEGG" id="sar:SAR1367"/>
<dbReference type="HOGENOM" id="CLU_002977_4_1_9"/>
<dbReference type="Proteomes" id="UP000000596">
    <property type="component" value="Chromosome"/>
</dbReference>
<dbReference type="GO" id="GO:0005694">
    <property type="term" value="C:chromosome"/>
    <property type="evidence" value="ECO:0007669"/>
    <property type="project" value="InterPro"/>
</dbReference>
<dbReference type="GO" id="GO:0005737">
    <property type="term" value="C:cytoplasm"/>
    <property type="evidence" value="ECO:0007669"/>
    <property type="project" value="TreeGrafter"/>
</dbReference>
<dbReference type="GO" id="GO:0009330">
    <property type="term" value="C:DNA topoisomerase type II (double strand cut, ATP-hydrolyzing) complex"/>
    <property type="evidence" value="ECO:0007669"/>
    <property type="project" value="TreeGrafter"/>
</dbReference>
<dbReference type="GO" id="GO:0019897">
    <property type="term" value="C:extrinsic component of plasma membrane"/>
    <property type="evidence" value="ECO:0007669"/>
    <property type="project" value="UniProtKB-UniRule"/>
</dbReference>
<dbReference type="GO" id="GO:0005524">
    <property type="term" value="F:ATP binding"/>
    <property type="evidence" value="ECO:0007669"/>
    <property type="project" value="InterPro"/>
</dbReference>
<dbReference type="GO" id="GO:0003677">
    <property type="term" value="F:DNA binding"/>
    <property type="evidence" value="ECO:0007669"/>
    <property type="project" value="UniProtKB-UniRule"/>
</dbReference>
<dbReference type="GO" id="GO:0034335">
    <property type="term" value="F:DNA negative supercoiling activity"/>
    <property type="evidence" value="ECO:0007669"/>
    <property type="project" value="UniProtKB-ARBA"/>
</dbReference>
<dbReference type="GO" id="GO:0007059">
    <property type="term" value="P:chromosome segregation"/>
    <property type="evidence" value="ECO:0007669"/>
    <property type="project" value="UniProtKB-UniRule"/>
</dbReference>
<dbReference type="GO" id="GO:0006265">
    <property type="term" value="P:DNA topological change"/>
    <property type="evidence" value="ECO:0007669"/>
    <property type="project" value="UniProtKB-UniRule"/>
</dbReference>
<dbReference type="CDD" id="cd00187">
    <property type="entry name" value="TOP4c"/>
    <property type="match status" value="1"/>
</dbReference>
<dbReference type="FunFam" id="1.10.268.10:FF:000001">
    <property type="entry name" value="DNA gyrase subunit A"/>
    <property type="match status" value="1"/>
</dbReference>
<dbReference type="FunFam" id="3.30.1360.40:FF:000002">
    <property type="entry name" value="DNA gyrase subunit A"/>
    <property type="match status" value="1"/>
</dbReference>
<dbReference type="FunFam" id="3.90.199.10:FF:000001">
    <property type="entry name" value="DNA gyrase subunit A"/>
    <property type="match status" value="1"/>
</dbReference>
<dbReference type="FunFam" id="2.120.10.90:FF:000005">
    <property type="entry name" value="DNA topoisomerase 4 subunit A"/>
    <property type="match status" value="1"/>
</dbReference>
<dbReference type="Gene3D" id="3.30.1360.40">
    <property type="match status" value="1"/>
</dbReference>
<dbReference type="Gene3D" id="2.120.10.90">
    <property type="entry name" value="DNA gyrase/topoisomerase IV, subunit A, C-terminal"/>
    <property type="match status" value="1"/>
</dbReference>
<dbReference type="Gene3D" id="3.90.199.10">
    <property type="entry name" value="Topoisomerase II, domain 5"/>
    <property type="match status" value="1"/>
</dbReference>
<dbReference type="Gene3D" id="1.10.268.10">
    <property type="entry name" value="Topoisomerase, domain 3"/>
    <property type="match status" value="1"/>
</dbReference>
<dbReference type="HAMAP" id="MF_00937">
    <property type="entry name" value="ParC_type2"/>
    <property type="match status" value="1"/>
</dbReference>
<dbReference type="InterPro" id="IPR006691">
    <property type="entry name" value="GyrA/parC_rep"/>
</dbReference>
<dbReference type="InterPro" id="IPR035516">
    <property type="entry name" value="Gyrase/topoIV_suA_C"/>
</dbReference>
<dbReference type="InterPro" id="IPR013760">
    <property type="entry name" value="Topo_IIA-like_dom_sf"/>
</dbReference>
<dbReference type="InterPro" id="IPR013758">
    <property type="entry name" value="Topo_IIA_A/C_ab"/>
</dbReference>
<dbReference type="InterPro" id="IPR013757">
    <property type="entry name" value="Topo_IIA_A_a_sf"/>
</dbReference>
<dbReference type="InterPro" id="IPR002205">
    <property type="entry name" value="Topo_IIA_dom_A"/>
</dbReference>
<dbReference type="InterPro" id="IPR005741">
    <property type="entry name" value="TopoIV_A_Gpos"/>
</dbReference>
<dbReference type="InterPro" id="IPR050220">
    <property type="entry name" value="Type_II_DNA_Topoisomerases"/>
</dbReference>
<dbReference type="NCBIfam" id="TIGR01061">
    <property type="entry name" value="parC_Gpos"/>
    <property type="match status" value="1"/>
</dbReference>
<dbReference type="NCBIfam" id="NF004044">
    <property type="entry name" value="PRK05561.1"/>
    <property type="match status" value="1"/>
</dbReference>
<dbReference type="PANTHER" id="PTHR43493">
    <property type="entry name" value="DNA GYRASE/TOPOISOMERASE SUBUNIT A"/>
    <property type="match status" value="1"/>
</dbReference>
<dbReference type="PANTHER" id="PTHR43493:SF9">
    <property type="entry name" value="DNA TOPOISOMERASE 4 SUBUNIT A"/>
    <property type="match status" value="1"/>
</dbReference>
<dbReference type="Pfam" id="PF03989">
    <property type="entry name" value="DNA_gyraseA_C"/>
    <property type="match status" value="5"/>
</dbReference>
<dbReference type="Pfam" id="PF00521">
    <property type="entry name" value="DNA_topoisoIV"/>
    <property type="match status" value="1"/>
</dbReference>
<dbReference type="SMART" id="SM00434">
    <property type="entry name" value="TOP4c"/>
    <property type="match status" value="1"/>
</dbReference>
<dbReference type="SUPFAM" id="SSF101904">
    <property type="entry name" value="GyrA/ParC C-terminal domain-like"/>
    <property type="match status" value="1"/>
</dbReference>
<dbReference type="SUPFAM" id="SSF56719">
    <property type="entry name" value="Type II DNA topoisomerase"/>
    <property type="match status" value="1"/>
</dbReference>
<dbReference type="PROSITE" id="PS52040">
    <property type="entry name" value="TOPO_IIA"/>
    <property type="match status" value="1"/>
</dbReference>
<protein>
    <recommendedName>
        <fullName evidence="1">DNA topoisomerase 4 subunit A</fullName>
        <ecNumber evidence="1">5.6.2.2</ecNumber>
    </recommendedName>
    <alternativeName>
        <fullName evidence="1">Topoisomerase IV subunit A</fullName>
    </alternativeName>
</protein>
<comment type="function">
    <text evidence="1">Topoisomerase IV is essential for chromosome segregation. It relaxes supercoiled DNA. Performs the decatenation events required during the replication of a circular DNA molecule.</text>
</comment>
<comment type="catalytic activity">
    <reaction evidence="1">
        <text>ATP-dependent breakage, passage and rejoining of double-stranded DNA.</text>
        <dbReference type="EC" id="5.6.2.2"/>
    </reaction>
</comment>
<comment type="subunit">
    <text evidence="1">Heterotetramer composed of ParC and ParE.</text>
</comment>
<comment type="subcellular location">
    <subcellularLocation>
        <location evidence="1">Cell membrane</location>
        <topology evidence="1">Peripheral membrane protein</topology>
    </subcellularLocation>
</comment>
<comment type="similarity">
    <text evidence="1">Belongs to the type II topoisomerase GyrA/ParC subunit family. ParC type 2 subfamily.</text>
</comment>